<name>DNAA_RICRO</name>
<keyword id="KW-0067">ATP-binding</keyword>
<keyword id="KW-0963">Cytoplasm</keyword>
<keyword id="KW-0235">DNA replication</keyword>
<keyword id="KW-0238">DNA-binding</keyword>
<keyword id="KW-0446">Lipid-binding</keyword>
<keyword id="KW-0547">Nucleotide-binding</keyword>
<evidence type="ECO:0000255" key="1">
    <source>
        <dbReference type="HAMAP-Rule" id="MF_00377"/>
    </source>
</evidence>
<gene>
    <name evidence="1" type="primary">dnaA</name>
    <name type="ordered locus">RrIowa_1088</name>
</gene>
<accession>B0BYF7</accession>
<organism>
    <name type="scientific">Rickettsia rickettsii (strain Iowa)</name>
    <dbReference type="NCBI Taxonomy" id="452659"/>
    <lineage>
        <taxon>Bacteria</taxon>
        <taxon>Pseudomonadati</taxon>
        <taxon>Pseudomonadota</taxon>
        <taxon>Alphaproteobacteria</taxon>
        <taxon>Rickettsiales</taxon>
        <taxon>Rickettsiaceae</taxon>
        <taxon>Rickettsieae</taxon>
        <taxon>Rickettsia</taxon>
        <taxon>spotted fever group</taxon>
    </lineage>
</organism>
<sequence length="463" mass="52943">MSTNQIILTDQGDNYVNVWSHVAQDLYNHYGETLYNSWFSKVNFIESSLNTVILCAPTNFVRDWIKSKYSMVILQLFQHYNNTIKSIEIITKELPGTTQTVTELPTKTFADIGSSELNSENIFSTLDVRFTFDNFVVGAPNELAYAAARAVAESSGAVSESNPLFLYGGVGLGKTHLMHAIGWYIKQHNPSRKVIYMSAEKFMYQFVKALRNKEVISFKEKFRSVDVLMIDDIQFICGKDSTQEEFFHTFNTLIDNNRQMVISCDRSPSDLDNIEDRIKSRLGWGLVADVHSTTYELRLGILESKIEQMNVKIPKDVIDFLASKIVSNVRELEGALNKVIAHSNFTLKEITLENTQNILRDLLRSNERIITVEDIQKKVASRYNIKLSDMSSSRRLREVARPRQIAMYLSKALTPKSLADIGKKFGKKDHTTVMHAIKKVEELLENDIELREEINLLMKILQN</sequence>
<feature type="chain" id="PRO_1000079958" description="Chromosomal replication initiator protein DnaA">
    <location>
        <begin position="1"/>
        <end position="463"/>
    </location>
</feature>
<feature type="region of interest" description="Domain I, interacts with DnaA modulators" evidence="1">
    <location>
        <begin position="1"/>
        <end position="83"/>
    </location>
</feature>
<feature type="region of interest" description="Domain II" evidence="1">
    <location>
        <begin position="83"/>
        <end position="124"/>
    </location>
</feature>
<feature type="region of interest" description="Domain III, AAA+ region" evidence="1">
    <location>
        <begin position="125"/>
        <end position="343"/>
    </location>
</feature>
<feature type="region of interest" description="Domain IV, binds dsDNA" evidence="1">
    <location>
        <begin position="344"/>
        <end position="463"/>
    </location>
</feature>
<feature type="binding site" evidence="1">
    <location>
        <position position="171"/>
    </location>
    <ligand>
        <name>ATP</name>
        <dbReference type="ChEBI" id="CHEBI:30616"/>
    </ligand>
</feature>
<feature type="binding site" evidence="1">
    <location>
        <position position="173"/>
    </location>
    <ligand>
        <name>ATP</name>
        <dbReference type="ChEBI" id="CHEBI:30616"/>
    </ligand>
</feature>
<feature type="binding site" evidence="1">
    <location>
        <position position="174"/>
    </location>
    <ligand>
        <name>ATP</name>
        <dbReference type="ChEBI" id="CHEBI:30616"/>
    </ligand>
</feature>
<feature type="binding site" evidence="1">
    <location>
        <position position="175"/>
    </location>
    <ligand>
        <name>ATP</name>
        <dbReference type="ChEBI" id="CHEBI:30616"/>
    </ligand>
</feature>
<protein>
    <recommendedName>
        <fullName evidence="1">Chromosomal replication initiator protein DnaA</fullName>
    </recommendedName>
</protein>
<comment type="function">
    <text evidence="1">Plays an essential role in the initiation and regulation of chromosomal replication. ATP-DnaA binds to the origin of replication (oriC) to initiate formation of the DNA replication initiation complex once per cell cycle. Binds the DnaA box (a 9 base pair repeat at the origin) and separates the double-stranded (ds)DNA. Forms a right-handed helical filament on oriC DNA; dsDNA binds to the exterior of the filament while single-stranded (ss)DNA is stabiized in the filament's interior. The ATP-DnaA-oriC complex binds and stabilizes one strand of the AT-rich DNA unwinding element (DUE), permitting loading of DNA polymerase. After initiation quickly degrades to an ADP-DnaA complex that is not apt for DNA replication. Binds acidic phospholipids.</text>
</comment>
<comment type="subunit">
    <text evidence="1">Oligomerizes as a right-handed, spiral filament on DNA at oriC.</text>
</comment>
<comment type="subcellular location">
    <subcellularLocation>
        <location evidence="1">Cytoplasm</location>
    </subcellularLocation>
</comment>
<comment type="domain">
    <text evidence="1">Domain I is involved in oligomerization and binding regulators, domain II is flexibile and of varying length in different bacteria, domain III forms the AAA+ region, while domain IV binds dsDNA.</text>
</comment>
<comment type="similarity">
    <text evidence="1">Belongs to the DnaA family.</text>
</comment>
<dbReference type="EMBL" id="CP000766">
    <property type="protein sequence ID" value="ABY72883.1"/>
    <property type="molecule type" value="Genomic_DNA"/>
</dbReference>
<dbReference type="RefSeq" id="WP_010977515.1">
    <property type="nucleotide sequence ID" value="NC_010263.3"/>
</dbReference>
<dbReference type="SMR" id="B0BYF7"/>
<dbReference type="GeneID" id="927916"/>
<dbReference type="KEGG" id="rrj:RrIowa_1088"/>
<dbReference type="eggNOG" id="COG0593">
    <property type="taxonomic scope" value="Bacteria"/>
</dbReference>
<dbReference type="HOGENOM" id="CLU_026910_3_0_5"/>
<dbReference type="Proteomes" id="UP000000796">
    <property type="component" value="Chromosome"/>
</dbReference>
<dbReference type="GO" id="GO:0005737">
    <property type="term" value="C:cytoplasm"/>
    <property type="evidence" value="ECO:0007669"/>
    <property type="project" value="UniProtKB-SubCell"/>
</dbReference>
<dbReference type="GO" id="GO:0005886">
    <property type="term" value="C:plasma membrane"/>
    <property type="evidence" value="ECO:0007669"/>
    <property type="project" value="TreeGrafter"/>
</dbReference>
<dbReference type="GO" id="GO:0005524">
    <property type="term" value="F:ATP binding"/>
    <property type="evidence" value="ECO:0007669"/>
    <property type="project" value="UniProtKB-UniRule"/>
</dbReference>
<dbReference type="GO" id="GO:0016887">
    <property type="term" value="F:ATP hydrolysis activity"/>
    <property type="evidence" value="ECO:0007669"/>
    <property type="project" value="InterPro"/>
</dbReference>
<dbReference type="GO" id="GO:0003688">
    <property type="term" value="F:DNA replication origin binding"/>
    <property type="evidence" value="ECO:0007669"/>
    <property type="project" value="UniProtKB-UniRule"/>
</dbReference>
<dbReference type="GO" id="GO:0008289">
    <property type="term" value="F:lipid binding"/>
    <property type="evidence" value="ECO:0007669"/>
    <property type="project" value="UniProtKB-KW"/>
</dbReference>
<dbReference type="GO" id="GO:0006270">
    <property type="term" value="P:DNA replication initiation"/>
    <property type="evidence" value="ECO:0007669"/>
    <property type="project" value="UniProtKB-UniRule"/>
</dbReference>
<dbReference type="GO" id="GO:0006275">
    <property type="term" value="P:regulation of DNA replication"/>
    <property type="evidence" value="ECO:0007669"/>
    <property type="project" value="UniProtKB-UniRule"/>
</dbReference>
<dbReference type="CDD" id="cd00009">
    <property type="entry name" value="AAA"/>
    <property type="match status" value="1"/>
</dbReference>
<dbReference type="CDD" id="cd06571">
    <property type="entry name" value="Bac_DnaA_C"/>
    <property type="match status" value="1"/>
</dbReference>
<dbReference type="FunFam" id="3.40.50.300:FF:000668">
    <property type="entry name" value="Chromosomal replication initiator protein DnaA"/>
    <property type="match status" value="1"/>
</dbReference>
<dbReference type="Gene3D" id="1.10.1750.10">
    <property type="match status" value="1"/>
</dbReference>
<dbReference type="Gene3D" id="1.10.8.60">
    <property type="match status" value="1"/>
</dbReference>
<dbReference type="Gene3D" id="3.30.300.180">
    <property type="match status" value="1"/>
</dbReference>
<dbReference type="Gene3D" id="3.40.50.300">
    <property type="entry name" value="P-loop containing nucleotide triphosphate hydrolases"/>
    <property type="match status" value="1"/>
</dbReference>
<dbReference type="HAMAP" id="MF_00377">
    <property type="entry name" value="DnaA_bact"/>
    <property type="match status" value="1"/>
</dbReference>
<dbReference type="InterPro" id="IPR003593">
    <property type="entry name" value="AAA+_ATPase"/>
</dbReference>
<dbReference type="InterPro" id="IPR001957">
    <property type="entry name" value="Chromosome_initiator_DnaA"/>
</dbReference>
<dbReference type="InterPro" id="IPR020591">
    <property type="entry name" value="Chromosome_initiator_DnaA-like"/>
</dbReference>
<dbReference type="InterPro" id="IPR018312">
    <property type="entry name" value="Chromosome_initiator_DnaA_CS"/>
</dbReference>
<dbReference type="InterPro" id="IPR013159">
    <property type="entry name" value="DnaA_C"/>
</dbReference>
<dbReference type="InterPro" id="IPR013317">
    <property type="entry name" value="DnaA_dom"/>
</dbReference>
<dbReference type="InterPro" id="IPR024633">
    <property type="entry name" value="DnaA_N_dom"/>
</dbReference>
<dbReference type="InterPro" id="IPR038454">
    <property type="entry name" value="DnaA_N_sf"/>
</dbReference>
<dbReference type="InterPro" id="IPR027417">
    <property type="entry name" value="P-loop_NTPase"/>
</dbReference>
<dbReference type="InterPro" id="IPR010921">
    <property type="entry name" value="Trp_repressor/repl_initiator"/>
</dbReference>
<dbReference type="NCBIfam" id="TIGR00362">
    <property type="entry name" value="DnaA"/>
    <property type="match status" value="1"/>
</dbReference>
<dbReference type="PANTHER" id="PTHR30050">
    <property type="entry name" value="CHROMOSOMAL REPLICATION INITIATOR PROTEIN DNAA"/>
    <property type="match status" value="1"/>
</dbReference>
<dbReference type="PANTHER" id="PTHR30050:SF2">
    <property type="entry name" value="CHROMOSOMAL REPLICATION INITIATOR PROTEIN DNAA"/>
    <property type="match status" value="1"/>
</dbReference>
<dbReference type="Pfam" id="PF00308">
    <property type="entry name" value="Bac_DnaA"/>
    <property type="match status" value="1"/>
</dbReference>
<dbReference type="Pfam" id="PF08299">
    <property type="entry name" value="Bac_DnaA_C"/>
    <property type="match status" value="1"/>
</dbReference>
<dbReference type="Pfam" id="PF11638">
    <property type="entry name" value="DnaA_N"/>
    <property type="match status" value="1"/>
</dbReference>
<dbReference type="PRINTS" id="PR00051">
    <property type="entry name" value="DNAA"/>
</dbReference>
<dbReference type="SMART" id="SM00382">
    <property type="entry name" value="AAA"/>
    <property type="match status" value="1"/>
</dbReference>
<dbReference type="SMART" id="SM00760">
    <property type="entry name" value="Bac_DnaA_C"/>
    <property type="match status" value="1"/>
</dbReference>
<dbReference type="SUPFAM" id="SSF52540">
    <property type="entry name" value="P-loop containing nucleoside triphosphate hydrolases"/>
    <property type="match status" value="1"/>
</dbReference>
<dbReference type="SUPFAM" id="SSF48295">
    <property type="entry name" value="TrpR-like"/>
    <property type="match status" value="1"/>
</dbReference>
<dbReference type="PROSITE" id="PS01008">
    <property type="entry name" value="DNAA"/>
    <property type="match status" value="1"/>
</dbReference>
<reference key="1">
    <citation type="journal article" date="2008" name="Infect. Immun.">
        <title>Genomic comparison of virulent Rickettsia rickettsii Sheila Smith and avirulent Rickettsia rickettsii Iowa.</title>
        <authorList>
            <person name="Ellison D.W."/>
            <person name="Clark T.R."/>
            <person name="Sturdevant D.E."/>
            <person name="Virtaneva K."/>
            <person name="Porcella S.F."/>
            <person name="Hackstadt T."/>
        </authorList>
    </citation>
    <scope>NUCLEOTIDE SEQUENCE [LARGE SCALE GENOMIC DNA]</scope>
    <source>
        <strain>Iowa</strain>
    </source>
</reference>
<proteinExistence type="inferred from homology"/>